<organism>
    <name type="scientific">Dermacentor andersoni</name>
    <name type="common">Rocky mountain wood tick</name>
    <dbReference type="NCBI Taxonomy" id="34620"/>
    <lineage>
        <taxon>Eukaryota</taxon>
        <taxon>Metazoa</taxon>
        <taxon>Ecdysozoa</taxon>
        <taxon>Arthropoda</taxon>
        <taxon>Chelicerata</taxon>
        <taxon>Arachnida</taxon>
        <taxon>Acari</taxon>
        <taxon>Parasitiformes</taxon>
        <taxon>Ixodida</taxon>
        <taxon>Ixodoidea</taxon>
        <taxon>Ixodidae</taxon>
        <taxon>Rhipicephalinae</taxon>
        <taxon>Dermacentor</taxon>
    </lineage>
</organism>
<accession>P0DQV0</accession>
<dbReference type="EMBL" id="EG363232">
    <property type="status" value="NOT_ANNOTATED_CDS"/>
    <property type="molecule type" value="mRNA"/>
</dbReference>
<dbReference type="SMR" id="P0DQV0"/>
<dbReference type="VEuPathDB" id="VectorBase:DAND_029292"/>
<dbReference type="GO" id="GO:0005576">
    <property type="term" value="C:extracellular region"/>
    <property type="evidence" value="ECO:0007669"/>
    <property type="project" value="UniProtKB-SubCell"/>
</dbReference>
<dbReference type="GO" id="GO:0090729">
    <property type="term" value="F:toxin activity"/>
    <property type="evidence" value="ECO:0007669"/>
    <property type="project" value="UniProtKB-KW"/>
</dbReference>
<dbReference type="CDD" id="cd22951">
    <property type="entry name" value="C5_RaCI-like"/>
    <property type="match status" value="1"/>
</dbReference>
<reference key="1">
    <citation type="journal article" date="2016" name="Nat. Struct. Mol. Biol.">
        <title>Structural basis for therapeutic inhibition of complement C5.</title>
        <authorList>
            <person name="Jore M.M."/>
            <person name="Johnson S."/>
            <person name="Sheppard D."/>
            <person name="Barber N.M."/>
            <person name="Li Y.I."/>
            <person name="Nunn M.A."/>
            <person name="Elmlund H."/>
            <person name="Lea S.M."/>
        </authorList>
    </citation>
    <scope>NUCLEOTIDE SEQUENCE [MRNA]</scope>
    <source>
        <tissue>Salivary gland</tissue>
    </source>
</reference>
<name>C5I6_DERAN</name>
<keyword id="KW-1216">Complement system impairing toxin</keyword>
<keyword id="KW-1015">Disulfide bond</keyword>
<keyword id="KW-0964">Secreted</keyword>
<keyword id="KW-0732">Signal</keyword>
<keyword id="KW-0800">Toxin</keyword>
<protein>
    <recommendedName>
        <fullName evidence="3">Complement inhibitor RaCI6</fullName>
    </recommendedName>
</protein>
<comment type="function">
    <text evidence="1">Complement inhibitor (By similarity). Prevents complement-mediated C5 activation by binding to C5 (By similarity). Binds C5 at a different binding site than the other tick complement inhibitors OmCI and CirpT1, and the drug eculizumab (By similarity).</text>
</comment>
<comment type="subcellular location">
    <subcellularLocation>
        <location evidence="5">Secreted</location>
    </subcellularLocation>
</comment>
<comment type="tissue specificity">
    <text evidence="5">Expressed in salivary glands.</text>
</comment>
<comment type="similarity">
    <text evidence="4">Belongs to the RaCI family.</text>
</comment>
<evidence type="ECO:0000250" key="1">
    <source>
        <dbReference type="UniProtKB" id="A0A146B485"/>
    </source>
</evidence>
<evidence type="ECO:0000255" key="2"/>
<evidence type="ECO:0000303" key="3">
    <source>
    </source>
</evidence>
<evidence type="ECO:0000305" key="4"/>
<evidence type="ECO:0000305" key="5">
    <source>
    </source>
</evidence>
<feature type="signal peptide" evidence="2">
    <location>
        <begin position="1"/>
        <end position="24"/>
    </location>
</feature>
<feature type="chain" id="PRO_0000456231" description="Complement inhibitor RaCI6">
    <location>
        <begin position="25"/>
        <end position="102"/>
    </location>
</feature>
<feature type="disulfide bond" evidence="1">
    <location>
        <begin position="37"/>
        <end position="61"/>
    </location>
</feature>
<feature type="disulfide bond" evidence="1">
    <location>
        <begin position="42"/>
        <end position="63"/>
    </location>
</feature>
<sequence>MAALNGLVLLLLTISAMFISECYSSGESQSIQRNGRCEEVTCQRKPNHLGVAVTSGCPPGCLCVIQAPDNAVNANGTRYELMTTTTTKTTTTSGTPSSEDPE</sequence>
<proteinExistence type="inferred from homology"/>